<comment type="function">
    <text evidence="4">Auxin response factors (ARFs) are transcriptional factors that bind specifically to the DNA sequence 5'-TGTCTC-3' found in the auxin-responsive promoter elements (AuxREs). Could act as transcriptional activator or repressor. Formation of heterodimers with Aux/IAA proteins may alter their ability to modulate early auxin response genes expression.</text>
</comment>
<comment type="subunit">
    <text evidence="1">Homodimers and heterodimers.</text>
</comment>
<comment type="subcellular location">
    <subcellularLocation>
        <location>Nucleus</location>
    </subcellularLocation>
</comment>
<comment type="domain">
    <text>Interactions between auxin response factors (ARFs) and Aux/IAA proteins occur through their C-terminal dimerization domains III and IV.</text>
</comment>
<comment type="similarity">
    <text evidence="5">Belongs to the ARF family.</text>
</comment>
<comment type="sequence caution" evidence="5">
    <conflict type="erroneous gene model prediction">
        <sequence resource="EMBL-CDS" id="AAF79263"/>
    </conflict>
</comment>
<comment type="sequence caution" evidence="5">
    <conflict type="erroneous gene model prediction">
        <sequence resource="EMBL-CDS" id="AAG51897"/>
    </conflict>
</comment>
<name>ARFU_ARATH</name>
<protein>
    <recommendedName>
        <fullName>Putative auxin response factor 21</fullName>
    </recommendedName>
</protein>
<proteinExistence type="inferred from homology"/>
<accession>Q9C8N9</accession>
<accession>Q9LNK2</accession>
<sequence>MESGNIVNAQPKLSGIIDGSKSYMYEQLWKLCAGPLCDIPKLGENVYYFPQGNIELVQASTREELNELQPICDLPSKLQCRVIAIHLKVENNSDEIYAEITLMPDTTQVVIPTQSENRFRPLVNSFTKVLTASDTSAYGGFSVPKKHAIECLPPLDMSQPLPAQEILAIDLHDNQWRFRHNYRGTPQRHSLTTGWNEFITSKKLVKGDVIVFVRGETGELRVGIRRARHQQGNIPSSIVSIDCMRHGVIASAKHAFDNQCIFIVVYKPRSSQFIVSYDKFLDAVNNKFNVGSRFTMRFEGDDFSERRYFGTIIGVSDFSPHWKCSEWRSLEVQWDEFASFSRPNKVSPWEIEHLVPALNVPRSSLLKNKRLREVNEFGSSSSHLLPPILTQGQEIGQLSVASPMNISLRYRDTTEAAMNPSRLLMSYPVQPMPKLNYNNQMVTQIEENITTKAGTNFRLFGVTLDTPPMIKDPIKQIGSDISKLTERKKFGQSQTLRSPIEIQSKQFSSSRTCTKVQMQGVTIGRAVDLSVLNGYDQLILELEKLFDIKGQLQTRNQWKIAFTDSDGYEMLVGDDPWPEFCKMVKKILIYSKEEVKNLKSSKSLSS</sequence>
<keyword id="KW-0927">Auxin signaling pathway</keyword>
<keyword id="KW-0238">DNA-binding</keyword>
<keyword id="KW-0539">Nucleus</keyword>
<keyword id="KW-1185">Reference proteome</keyword>
<keyword id="KW-0804">Transcription</keyword>
<keyword id="KW-0805">Transcription regulation</keyword>
<gene>
    <name type="primary">ARF21</name>
    <name type="ordered locus">At1g34410</name>
    <name type="ORF">F12K21.26</name>
    <name type="ORF">F7P12.12</name>
</gene>
<feature type="chain" id="PRO_0000111525" description="Putative auxin response factor 21">
    <location>
        <begin position="1"/>
        <end position="606"/>
    </location>
</feature>
<feature type="domain" description="PB1" evidence="3">
    <location>
        <begin position="511"/>
        <end position="592"/>
    </location>
</feature>
<feature type="DNA-binding region" description="TF-B3" evidence="2">
    <location>
        <begin position="126"/>
        <end position="228"/>
    </location>
</feature>
<evidence type="ECO:0000250" key="1"/>
<evidence type="ECO:0000255" key="2">
    <source>
        <dbReference type="PROSITE-ProRule" id="PRU00326"/>
    </source>
</evidence>
<evidence type="ECO:0000255" key="3">
    <source>
        <dbReference type="PROSITE-ProRule" id="PRU01081"/>
    </source>
</evidence>
<evidence type="ECO:0000269" key="4">
    <source>
    </source>
</evidence>
<evidence type="ECO:0000305" key="5"/>
<reference key="1">
    <citation type="journal article" date="2000" name="Nature">
        <title>Sequence and analysis of chromosome 1 of the plant Arabidopsis thaliana.</title>
        <authorList>
            <person name="Theologis A."/>
            <person name="Ecker J.R."/>
            <person name="Palm C.J."/>
            <person name="Federspiel N.A."/>
            <person name="Kaul S."/>
            <person name="White O."/>
            <person name="Alonso J."/>
            <person name="Altafi H."/>
            <person name="Araujo R."/>
            <person name="Bowman C.L."/>
            <person name="Brooks S.Y."/>
            <person name="Buehler E."/>
            <person name="Chan A."/>
            <person name="Chao Q."/>
            <person name="Chen H."/>
            <person name="Cheuk R.F."/>
            <person name="Chin C.W."/>
            <person name="Chung M.K."/>
            <person name="Conn L."/>
            <person name="Conway A.B."/>
            <person name="Conway A.R."/>
            <person name="Creasy T.H."/>
            <person name="Dewar K."/>
            <person name="Dunn P."/>
            <person name="Etgu P."/>
            <person name="Feldblyum T.V."/>
            <person name="Feng J.-D."/>
            <person name="Fong B."/>
            <person name="Fujii C.Y."/>
            <person name="Gill J.E."/>
            <person name="Goldsmith A.D."/>
            <person name="Haas B."/>
            <person name="Hansen N.F."/>
            <person name="Hughes B."/>
            <person name="Huizar L."/>
            <person name="Hunter J.L."/>
            <person name="Jenkins J."/>
            <person name="Johnson-Hopson C."/>
            <person name="Khan S."/>
            <person name="Khaykin E."/>
            <person name="Kim C.J."/>
            <person name="Koo H.L."/>
            <person name="Kremenetskaia I."/>
            <person name="Kurtz D.B."/>
            <person name="Kwan A."/>
            <person name="Lam B."/>
            <person name="Langin-Hooper S."/>
            <person name="Lee A."/>
            <person name="Lee J.M."/>
            <person name="Lenz C.A."/>
            <person name="Li J.H."/>
            <person name="Li Y.-P."/>
            <person name="Lin X."/>
            <person name="Liu S.X."/>
            <person name="Liu Z.A."/>
            <person name="Luros J.S."/>
            <person name="Maiti R."/>
            <person name="Marziali A."/>
            <person name="Militscher J."/>
            <person name="Miranda M."/>
            <person name="Nguyen M."/>
            <person name="Nierman W.C."/>
            <person name="Osborne B.I."/>
            <person name="Pai G."/>
            <person name="Peterson J."/>
            <person name="Pham P.K."/>
            <person name="Rizzo M."/>
            <person name="Rooney T."/>
            <person name="Rowley D."/>
            <person name="Sakano H."/>
            <person name="Salzberg S.L."/>
            <person name="Schwartz J.R."/>
            <person name="Shinn P."/>
            <person name="Southwick A.M."/>
            <person name="Sun H."/>
            <person name="Tallon L.J."/>
            <person name="Tambunga G."/>
            <person name="Toriumi M.J."/>
            <person name="Town C.D."/>
            <person name="Utterback T."/>
            <person name="Van Aken S."/>
            <person name="Vaysberg M."/>
            <person name="Vysotskaia V.S."/>
            <person name="Walker M."/>
            <person name="Wu D."/>
            <person name="Yu G."/>
            <person name="Fraser C.M."/>
            <person name="Venter J.C."/>
            <person name="Davis R.W."/>
        </authorList>
    </citation>
    <scope>NUCLEOTIDE SEQUENCE [LARGE SCALE GENOMIC DNA]</scope>
    <source>
        <strain>cv. Columbia</strain>
    </source>
</reference>
<reference key="2">
    <citation type="journal article" date="2017" name="Plant J.">
        <title>Araport11: a complete reannotation of the Arabidopsis thaliana reference genome.</title>
        <authorList>
            <person name="Cheng C.Y."/>
            <person name="Krishnakumar V."/>
            <person name="Chan A.P."/>
            <person name="Thibaud-Nissen F."/>
            <person name="Schobel S."/>
            <person name="Town C.D."/>
        </authorList>
    </citation>
    <scope>GENOME REANNOTATION</scope>
    <source>
        <strain>cv. Columbia</strain>
    </source>
</reference>
<reference key="3">
    <citation type="journal article" date="2002" name="Plant Mol. Biol.">
        <title>Auxin-responsive gene expression: genes, promoters and regulatory factors.</title>
        <authorList>
            <person name="Hagen G."/>
            <person name="Guilfoyle T.J."/>
        </authorList>
    </citation>
    <scope>GENE FAMILY</scope>
    <scope>NOMENCLATURE</scope>
    <scope>FUNCTION</scope>
</reference>
<reference key="4">
    <citation type="journal article" date="2008" name="Trends Plant Sci.">
        <title>The plant B3 superfamily.</title>
        <authorList>
            <person name="Swaminathan K."/>
            <person name="Peterson K."/>
            <person name="Jack T."/>
        </authorList>
    </citation>
    <scope>GENE FAMILY</scope>
</reference>
<organism>
    <name type="scientific">Arabidopsis thaliana</name>
    <name type="common">Mouse-ear cress</name>
    <dbReference type="NCBI Taxonomy" id="3702"/>
    <lineage>
        <taxon>Eukaryota</taxon>
        <taxon>Viridiplantae</taxon>
        <taxon>Streptophyta</taxon>
        <taxon>Embryophyta</taxon>
        <taxon>Tracheophyta</taxon>
        <taxon>Spermatophyta</taxon>
        <taxon>Magnoliopsida</taxon>
        <taxon>eudicotyledons</taxon>
        <taxon>Gunneridae</taxon>
        <taxon>Pentapetalae</taxon>
        <taxon>rosids</taxon>
        <taxon>malvids</taxon>
        <taxon>Brassicales</taxon>
        <taxon>Brassicaceae</taxon>
        <taxon>Camelineae</taxon>
        <taxon>Arabidopsis</taxon>
    </lineage>
</organism>
<dbReference type="EMBL" id="AC023279">
    <property type="protein sequence ID" value="AAF79263.1"/>
    <property type="status" value="ALT_SEQ"/>
    <property type="molecule type" value="Genomic_DNA"/>
</dbReference>
<dbReference type="EMBL" id="AC023913">
    <property type="protein sequence ID" value="AAG51897.1"/>
    <property type="status" value="ALT_SEQ"/>
    <property type="molecule type" value="Genomic_DNA"/>
</dbReference>
<dbReference type="EMBL" id="CP002684">
    <property type="protein sequence ID" value="AEE31710.1"/>
    <property type="molecule type" value="Genomic_DNA"/>
</dbReference>
<dbReference type="PIR" id="E86468">
    <property type="entry name" value="E86468"/>
</dbReference>
<dbReference type="RefSeq" id="NP_174701.2">
    <property type="nucleotide sequence ID" value="NM_103164.2"/>
</dbReference>
<dbReference type="SMR" id="Q9C8N9"/>
<dbReference type="STRING" id="3702.Q9C8N9"/>
<dbReference type="PaxDb" id="3702-AT1G34410.1"/>
<dbReference type="EnsemblPlants" id="AT1G34410.1">
    <property type="protein sequence ID" value="AT1G34410.1"/>
    <property type="gene ID" value="AT1G34410"/>
</dbReference>
<dbReference type="GeneID" id="840344"/>
<dbReference type="Gramene" id="AT1G34410.1">
    <property type="protein sequence ID" value="AT1G34410.1"/>
    <property type="gene ID" value="AT1G34410"/>
</dbReference>
<dbReference type="KEGG" id="ath:AT1G34410"/>
<dbReference type="Araport" id="AT1G34410"/>
<dbReference type="TAIR" id="AT1G34410">
    <property type="gene designation" value="ARF21"/>
</dbReference>
<dbReference type="eggNOG" id="ENOG502QTME">
    <property type="taxonomic scope" value="Eukaryota"/>
</dbReference>
<dbReference type="HOGENOM" id="CLU_002626_4_4_1"/>
<dbReference type="InParanoid" id="Q9C8N9"/>
<dbReference type="OMA" id="YSFATTM"/>
<dbReference type="PhylomeDB" id="Q9C8N9"/>
<dbReference type="PRO" id="PR:Q9C8N9"/>
<dbReference type="Proteomes" id="UP000006548">
    <property type="component" value="Chromosome 1"/>
</dbReference>
<dbReference type="ExpressionAtlas" id="Q9C8N9">
    <property type="expression patterns" value="baseline and differential"/>
</dbReference>
<dbReference type="GO" id="GO:0005634">
    <property type="term" value="C:nucleus"/>
    <property type="evidence" value="ECO:0007669"/>
    <property type="project" value="UniProtKB-SubCell"/>
</dbReference>
<dbReference type="GO" id="GO:0003677">
    <property type="term" value="F:DNA binding"/>
    <property type="evidence" value="ECO:0007669"/>
    <property type="project" value="UniProtKB-KW"/>
</dbReference>
<dbReference type="GO" id="GO:0003700">
    <property type="term" value="F:DNA-binding transcription factor activity"/>
    <property type="evidence" value="ECO:0000250"/>
    <property type="project" value="TAIR"/>
</dbReference>
<dbReference type="GO" id="GO:0009734">
    <property type="term" value="P:auxin-activated signaling pathway"/>
    <property type="evidence" value="ECO:0007669"/>
    <property type="project" value="UniProtKB-KW"/>
</dbReference>
<dbReference type="GO" id="GO:0006355">
    <property type="term" value="P:regulation of DNA-templated transcription"/>
    <property type="evidence" value="ECO:0000304"/>
    <property type="project" value="TAIR"/>
</dbReference>
<dbReference type="CDD" id="cd10017">
    <property type="entry name" value="B3_DNA"/>
    <property type="match status" value="1"/>
</dbReference>
<dbReference type="FunFam" id="2.30.30.1040:FF:000001">
    <property type="entry name" value="Auxin response factor"/>
    <property type="match status" value="1"/>
</dbReference>
<dbReference type="FunFam" id="2.40.330.10:FF:000001">
    <property type="entry name" value="Auxin response factor"/>
    <property type="match status" value="1"/>
</dbReference>
<dbReference type="FunFam" id="3.10.20.90:FF:000047">
    <property type="entry name" value="Auxin response factor"/>
    <property type="match status" value="1"/>
</dbReference>
<dbReference type="Gene3D" id="2.30.30.1040">
    <property type="match status" value="1"/>
</dbReference>
<dbReference type="Gene3D" id="2.40.330.10">
    <property type="entry name" value="DNA-binding pseudobarrel domain"/>
    <property type="match status" value="1"/>
</dbReference>
<dbReference type="Gene3D" id="3.10.20.90">
    <property type="entry name" value="Phosphatidylinositol 3-kinase Catalytic Subunit, Chain A, domain 1"/>
    <property type="match status" value="1"/>
</dbReference>
<dbReference type="InterPro" id="IPR010525">
    <property type="entry name" value="ARF_dom"/>
</dbReference>
<dbReference type="InterPro" id="IPR044835">
    <property type="entry name" value="ARF_plant"/>
</dbReference>
<dbReference type="InterPro" id="IPR033389">
    <property type="entry name" value="AUX/IAA_dom"/>
</dbReference>
<dbReference type="InterPro" id="IPR003340">
    <property type="entry name" value="B3_DNA-bd"/>
</dbReference>
<dbReference type="InterPro" id="IPR015300">
    <property type="entry name" value="DNA-bd_pseudobarrel_sf"/>
</dbReference>
<dbReference type="InterPro" id="IPR053793">
    <property type="entry name" value="PB1-like"/>
</dbReference>
<dbReference type="PANTHER" id="PTHR31384:SF164">
    <property type="entry name" value="AUXIN RESPONSE FACTOR 12-RELATED"/>
    <property type="match status" value="1"/>
</dbReference>
<dbReference type="PANTHER" id="PTHR31384">
    <property type="entry name" value="AUXIN RESPONSE FACTOR 4-RELATED"/>
    <property type="match status" value="1"/>
</dbReference>
<dbReference type="Pfam" id="PF06507">
    <property type="entry name" value="ARF_AD"/>
    <property type="match status" value="1"/>
</dbReference>
<dbReference type="Pfam" id="PF02309">
    <property type="entry name" value="AUX_IAA"/>
    <property type="match status" value="1"/>
</dbReference>
<dbReference type="Pfam" id="PF02362">
    <property type="entry name" value="B3"/>
    <property type="match status" value="1"/>
</dbReference>
<dbReference type="SMART" id="SM01019">
    <property type="entry name" value="B3"/>
    <property type="match status" value="1"/>
</dbReference>
<dbReference type="SUPFAM" id="SSF54277">
    <property type="entry name" value="CAD &amp; PB1 domains"/>
    <property type="match status" value="1"/>
</dbReference>
<dbReference type="SUPFAM" id="SSF101936">
    <property type="entry name" value="DNA-binding pseudobarrel domain"/>
    <property type="match status" value="1"/>
</dbReference>
<dbReference type="PROSITE" id="PS50863">
    <property type="entry name" value="B3"/>
    <property type="match status" value="1"/>
</dbReference>
<dbReference type="PROSITE" id="PS51745">
    <property type="entry name" value="PB1"/>
    <property type="match status" value="1"/>
</dbReference>